<dbReference type="EC" id="1.1.1.-" evidence="2"/>
<dbReference type="EMBL" id="AY554049">
    <property type="protein sequence ID" value="AAS68530.1"/>
    <property type="molecule type" value="mRNA"/>
</dbReference>
<dbReference type="RefSeq" id="NP_996852.1">
    <property type="nucleotide sequence ID" value="NM_206969.1"/>
</dbReference>
<dbReference type="SMR" id="Q6Q7D1"/>
<dbReference type="FunCoup" id="Q6Q7D1">
    <property type="interactions" value="153"/>
</dbReference>
<dbReference type="STRING" id="9913.ENSBTAP00000002346"/>
<dbReference type="GlyCosmos" id="Q6Q7D1">
    <property type="glycosylation" value="1 site, No reported glycans"/>
</dbReference>
<dbReference type="GlyGen" id="Q6Q7D1">
    <property type="glycosylation" value="1 site"/>
</dbReference>
<dbReference type="PaxDb" id="9913-ENSBTAP00000002346"/>
<dbReference type="Ensembl" id="ENSBTAT00000094660.1">
    <property type="protein sequence ID" value="ENSBTAP00000090903.1"/>
    <property type="gene ID" value="ENSBTAG00000001793.5"/>
</dbReference>
<dbReference type="Ensembl" id="ENSBTAT00000113799.1">
    <property type="protein sequence ID" value="ENSBTAP00000094905.1"/>
    <property type="gene ID" value="ENSBTAG00000001793.5"/>
</dbReference>
<dbReference type="GeneID" id="404546"/>
<dbReference type="KEGG" id="bta:404546"/>
<dbReference type="CTD" id="374875"/>
<dbReference type="VGNC" id="VGNC:29966">
    <property type="gene designation" value="HSD11B1L"/>
</dbReference>
<dbReference type="eggNOG" id="KOG1205">
    <property type="taxonomic scope" value="Eukaryota"/>
</dbReference>
<dbReference type="GeneTree" id="ENSGT00940000162487"/>
<dbReference type="HOGENOM" id="CLU_010194_2_7_1"/>
<dbReference type="InParanoid" id="Q6Q7D1"/>
<dbReference type="OrthoDB" id="1933717at2759"/>
<dbReference type="TreeFam" id="TF329114"/>
<dbReference type="Proteomes" id="UP000009136">
    <property type="component" value="Chromosome 7"/>
</dbReference>
<dbReference type="GO" id="GO:0005576">
    <property type="term" value="C:extracellular region"/>
    <property type="evidence" value="ECO:0007669"/>
    <property type="project" value="UniProtKB-SubCell"/>
</dbReference>
<dbReference type="GO" id="GO:0043231">
    <property type="term" value="C:intracellular membrane-bounded organelle"/>
    <property type="evidence" value="ECO:0000318"/>
    <property type="project" value="GO_Central"/>
</dbReference>
<dbReference type="GO" id="GO:0016491">
    <property type="term" value="F:oxidoreductase activity"/>
    <property type="evidence" value="ECO:0000318"/>
    <property type="project" value="GO_Central"/>
</dbReference>
<dbReference type="FunFam" id="3.40.50.720:FF:000359">
    <property type="entry name" value="hydroxysteroid 11-beta-dehydrogenase 1-like protein isoform X1"/>
    <property type="match status" value="1"/>
</dbReference>
<dbReference type="Gene3D" id="3.40.50.720">
    <property type="entry name" value="NAD(P)-binding Rossmann-like Domain"/>
    <property type="match status" value="1"/>
</dbReference>
<dbReference type="InterPro" id="IPR051253">
    <property type="entry name" value="11-beta-HSD"/>
</dbReference>
<dbReference type="InterPro" id="IPR036291">
    <property type="entry name" value="NAD(P)-bd_dom_sf"/>
</dbReference>
<dbReference type="InterPro" id="IPR020904">
    <property type="entry name" value="Sc_DH/Rdtase_CS"/>
</dbReference>
<dbReference type="InterPro" id="IPR002347">
    <property type="entry name" value="SDR_fam"/>
</dbReference>
<dbReference type="PANTHER" id="PTHR44279">
    <property type="entry name" value="HYDROXYSTEROID (11-BETA) DEHYDROGENASE 1-LIKE B-RELATED"/>
    <property type="match status" value="1"/>
</dbReference>
<dbReference type="PANTHER" id="PTHR44279:SF3">
    <property type="entry name" value="HYDROXYSTEROID 11-BETA-DEHYDROGENASE 1-LIKE PROTEIN"/>
    <property type="match status" value="1"/>
</dbReference>
<dbReference type="Pfam" id="PF00106">
    <property type="entry name" value="adh_short"/>
    <property type="match status" value="1"/>
</dbReference>
<dbReference type="PRINTS" id="PR00081">
    <property type="entry name" value="GDHRDH"/>
</dbReference>
<dbReference type="SUPFAM" id="SSF51735">
    <property type="entry name" value="NAD(P)-binding Rossmann-fold domains"/>
    <property type="match status" value="1"/>
</dbReference>
<dbReference type="PROSITE" id="PS00061">
    <property type="entry name" value="ADH_SHORT"/>
    <property type="match status" value="1"/>
</dbReference>
<protein>
    <recommendedName>
        <fullName>Hydroxysteroid 11-beta-dehydrogenase 1-like protein</fullName>
        <ecNumber evidence="2">1.1.1.-</ecNumber>
    </recommendedName>
    <alternativeName>
        <fullName>11-beta-hydroxysteroid dehydrogenase type 3</fullName>
        <shortName>11-DH3</shortName>
        <shortName>11-beta-HSD3</shortName>
    </alternativeName>
</protein>
<evidence type="ECO:0000250" key="1"/>
<evidence type="ECO:0000250" key="2">
    <source>
        <dbReference type="UniProtKB" id="Q7Z5J1"/>
    </source>
</evidence>
<evidence type="ECO:0000255" key="3"/>
<evidence type="ECO:0000255" key="4">
    <source>
        <dbReference type="PROSITE-ProRule" id="PRU10001"/>
    </source>
</evidence>
<evidence type="ECO:0000305" key="5"/>
<feature type="signal peptide" evidence="3">
    <location>
        <begin position="1"/>
        <end position="15"/>
    </location>
</feature>
<feature type="chain" id="PRO_0000316815" description="Hydroxysteroid 11-beta-dehydrogenase 1-like protein">
    <location>
        <begin position="16"/>
        <end position="287"/>
    </location>
</feature>
<feature type="active site" description="Proton acceptor" evidence="4">
    <location>
        <position position="178"/>
    </location>
</feature>
<feature type="binding site" evidence="1">
    <location>
        <begin position="36"/>
        <end position="62"/>
    </location>
    <ligand>
        <name>NADP(+)</name>
        <dbReference type="ChEBI" id="CHEBI:58349"/>
    </ligand>
</feature>
<feature type="binding site" evidence="1">
    <location>
        <begin position="87"/>
        <end position="88"/>
    </location>
    <ligand>
        <name>NADP(+)</name>
        <dbReference type="ChEBI" id="CHEBI:58349"/>
    </ligand>
</feature>
<feature type="binding site" evidence="1">
    <location>
        <begin position="114"/>
        <end position="116"/>
    </location>
    <ligand>
        <name>NADP(+)</name>
        <dbReference type="ChEBI" id="CHEBI:58349"/>
    </ligand>
</feature>
<feature type="binding site" evidence="1">
    <location>
        <position position="165"/>
    </location>
    <ligand>
        <name>substrate</name>
    </ligand>
</feature>
<feature type="binding site" evidence="1">
    <location>
        <begin position="178"/>
        <end position="182"/>
    </location>
    <ligand>
        <name>NADP(+)</name>
        <dbReference type="ChEBI" id="CHEBI:58349"/>
    </ligand>
</feature>
<feature type="binding site" evidence="1">
    <location>
        <begin position="211"/>
        <end position="217"/>
    </location>
    <ligand>
        <name>NADP(+)</name>
        <dbReference type="ChEBI" id="CHEBI:58349"/>
    </ligand>
</feature>
<feature type="glycosylation site" description="N-linked (GlcNAc...) asparagine" evidence="3">
    <location>
        <position position="280"/>
    </location>
</feature>
<feature type="splice variant" id="VSP_062579" description="In isoform 3.">
    <location>
        <begin position="25"/>
        <end position="105"/>
    </location>
</feature>
<feature type="splice variant" id="VSP_062580" description="In isoform 2.">
    <original>VVGNCRKLGAPKVFYIAADMASPEVPERVVQFALDKLGGLDYLVLNHLGAAPAGTRVRSSQSTRWLM</original>
    <variation>APPSWPWLSSPANAPTLSSERSPSPQAPPLPTKAFTPSPSGLGFLLRPVTRSRHL</variation>
    <location>
        <begin position="69"/>
        <end position="135"/>
    </location>
</feature>
<reference key="1">
    <citation type="submission" date="2004-02" db="EMBL/GenBank/DDBJ databases">
        <authorList>
            <person name="Huang C.Q."/>
            <person name="Wu S.L."/>
            <person name="Zhou J.L."/>
        </authorList>
    </citation>
    <scope>NUCLEOTIDE SEQUENCE [MRNA]</scope>
</reference>
<reference key="2">
    <citation type="submission" date="2018-03" db="EMBL/GenBank/DDBJ databases">
        <title>ARS-UCD1.2.</title>
        <authorList>
            <person name="Rosen B.D."/>
            <person name="Bickhart D.M."/>
            <person name="Koren S."/>
            <person name="Schnabel R.D."/>
            <person name="Hall R."/>
            <person name="Zimin A."/>
            <person name="Dreischer C."/>
            <person name="Schultheiss S."/>
            <person name="Schroeder S.G."/>
            <person name="Elsik C.G."/>
            <person name="Couldrey C."/>
            <person name="Liu G.E."/>
            <person name="Van Tassell C.P."/>
            <person name="Phillippy A.M."/>
            <person name="Smith T.P.L."/>
            <person name="Medrano J.F."/>
        </authorList>
    </citation>
    <scope>NUCLEOTIDE SEQUENCE [LARGE SCALE GENOMIC DNA]</scope>
    <source>
        <strain>Hereford</strain>
    </source>
</reference>
<keyword id="KW-0025">Alternative splicing</keyword>
<keyword id="KW-0325">Glycoprotein</keyword>
<keyword id="KW-0521">NADP</keyword>
<keyword id="KW-0560">Oxidoreductase</keyword>
<keyword id="KW-1185">Reference proteome</keyword>
<keyword id="KW-0964">Secreted</keyword>
<keyword id="KW-0732">Signal</keyword>
<comment type="function">
    <text evidence="2">Unidirectional NADP(+)-dependent cortisol dehydrogenase (in vitro).</text>
</comment>
<comment type="catalytic activity">
    <reaction evidence="2">
        <text>cortisone + NADPH + H(+) = cortisol + NADP(+)</text>
        <dbReference type="Rhea" id="RHEA:68616"/>
        <dbReference type="ChEBI" id="CHEBI:15378"/>
        <dbReference type="ChEBI" id="CHEBI:16962"/>
        <dbReference type="ChEBI" id="CHEBI:17650"/>
        <dbReference type="ChEBI" id="CHEBI:57783"/>
        <dbReference type="ChEBI" id="CHEBI:58349"/>
    </reaction>
    <physiologicalReaction direction="right-to-left" evidence="2">
        <dbReference type="Rhea" id="RHEA:68618"/>
    </physiologicalReaction>
</comment>
<comment type="subcellular location">
    <subcellularLocation>
        <location evidence="5">Secreted</location>
    </subcellularLocation>
</comment>
<comment type="alternative products">
    <event type="alternative splicing"/>
    <isoform>
        <id>Q6Q7D1-1</id>
        <name>1</name>
        <sequence type="displayed"/>
    </isoform>
    <isoform>
        <id>Q6Q7D1-2</id>
        <name>2</name>
        <sequence type="described" ref="VSP_062580"/>
    </isoform>
    <isoform>
        <id>Q6Q7D1-3</id>
        <name>3</name>
        <sequence type="described" ref="VSP_062579"/>
    </isoform>
</comment>
<comment type="similarity">
    <text evidence="5">Belongs to the short-chain dehydrogenases/reductases (SDR) family.</text>
</comment>
<comment type="caution">
    <text evidence="5">Present in human, non-human primate, sheep, pig and many other higher organisms, whereas an ortholog is absent in the genomes of mouse, rat and rabbit.</text>
</comment>
<organism>
    <name type="scientific">Bos taurus</name>
    <name type="common">Bovine</name>
    <dbReference type="NCBI Taxonomy" id="9913"/>
    <lineage>
        <taxon>Eukaryota</taxon>
        <taxon>Metazoa</taxon>
        <taxon>Chordata</taxon>
        <taxon>Craniata</taxon>
        <taxon>Vertebrata</taxon>
        <taxon>Euteleostomi</taxon>
        <taxon>Mammalia</taxon>
        <taxon>Eutheria</taxon>
        <taxon>Laurasiatheria</taxon>
        <taxon>Artiodactyla</taxon>
        <taxon>Ruminantia</taxon>
        <taxon>Pecora</taxon>
        <taxon>Bovidae</taxon>
        <taxon>Bovinae</taxon>
        <taxon>Bos</taxon>
    </lineage>
</organism>
<sequence>MKVLLLTGLGALFFAYYWDDNFDPASLHGARVLLTGVSAGIGEELAYHYARLGSHLVLTAHTEALLQQVVGNCRKLGAPKVFYIAADMASPEVPERVVQFALDKLGGLDYLVLNHLGAAPAGTRVRSSQSTRWLMQMNFLSYVQLTSSALPSLTDSKGSLVVVSSLLGRVPTSFSSPYSAAKFALDSFFSSLRRELDVQEVNVAITMCVLGLRDRASAAEGVRGITRVRAAPGPKAALAVIRGGATRASGVFYPWRFHLLCLLRSWMPHSRAWFVRQELNITTPAAA</sequence>
<proteinExistence type="evidence at transcript level"/>
<name>DHI1L_BOVIN</name>
<accession>Q6Q7D1</accession>
<accession>A0AAA9SZQ1</accession>
<accession>A0AAA9T846</accession>
<gene>
    <name type="primary">HSD11B1L</name>
    <name type="synonym">HSD3</name>
</gene>